<gene>
    <name type="primary">ERV25</name>
    <name type="ordered locus">KLLA0B00935g</name>
</gene>
<evidence type="ECO:0000250" key="1"/>
<evidence type="ECO:0000255" key="2"/>
<evidence type="ECO:0000255" key="3">
    <source>
        <dbReference type="PROSITE-ProRule" id="PRU00096"/>
    </source>
</evidence>
<evidence type="ECO:0000305" key="4"/>
<name>TMEDA_KLULA</name>
<reference key="1">
    <citation type="journal article" date="2004" name="Nature">
        <title>Genome evolution in yeasts.</title>
        <authorList>
            <person name="Dujon B."/>
            <person name="Sherman D."/>
            <person name="Fischer G."/>
            <person name="Durrens P."/>
            <person name="Casaregola S."/>
            <person name="Lafontaine I."/>
            <person name="de Montigny J."/>
            <person name="Marck C."/>
            <person name="Neuveglise C."/>
            <person name="Talla E."/>
            <person name="Goffard N."/>
            <person name="Frangeul L."/>
            <person name="Aigle M."/>
            <person name="Anthouard V."/>
            <person name="Babour A."/>
            <person name="Barbe V."/>
            <person name="Barnay S."/>
            <person name="Blanchin S."/>
            <person name="Beckerich J.-M."/>
            <person name="Beyne E."/>
            <person name="Bleykasten C."/>
            <person name="Boisrame A."/>
            <person name="Boyer J."/>
            <person name="Cattolico L."/>
            <person name="Confanioleri F."/>
            <person name="de Daruvar A."/>
            <person name="Despons L."/>
            <person name="Fabre E."/>
            <person name="Fairhead C."/>
            <person name="Ferry-Dumazet H."/>
            <person name="Groppi A."/>
            <person name="Hantraye F."/>
            <person name="Hennequin C."/>
            <person name="Jauniaux N."/>
            <person name="Joyet P."/>
            <person name="Kachouri R."/>
            <person name="Kerrest A."/>
            <person name="Koszul R."/>
            <person name="Lemaire M."/>
            <person name="Lesur I."/>
            <person name="Ma L."/>
            <person name="Muller H."/>
            <person name="Nicaud J.-M."/>
            <person name="Nikolski M."/>
            <person name="Oztas S."/>
            <person name="Ozier-Kalogeropoulos O."/>
            <person name="Pellenz S."/>
            <person name="Potier S."/>
            <person name="Richard G.-F."/>
            <person name="Straub M.-L."/>
            <person name="Suleau A."/>
            <person name="Swennen D."/>
            <person name="Tekaia F."/>
            <person name="Wesolowski-Louvel M."/>
            <person name="Westhof E."/>
            <person name="Wirth B."/>
            <person name="Zeniou-Meyer M."/>
            <person name="Zivanovic Y."/>
            <person name="Bolotin-Fukuhara M."/>
            <person name="Thierry A."/>
            <person name="Bouchier C."/>
            <person name="Caudron B."/>
            <person name="Scarpelli C."/>
            <person name="Gaillardin C."/>
            <person name="Weissenbach J."/>
            <person name="Wincker P."/>
            <person name="Souciet J.-L."/>
        </authorList>
    </citation>
    <scope>NUCLEOTIDE SEQUENCE [LARGE SCALE GENOMIC DNA]</scope>
    <source>
        <strain>ATCC 8585 / CBS 2359 / DSM 70799 / NBRC 1267 / NRRL Y-1140 / WM37</strain>
    </source>
</reference>
<feature type="signal peptide" evidence="2">
    <location>
        <begin position="1"/>
        <end position="21"/>
    </location>
</feature>
<feature type="chain" id="PRO_0000237695" description="Endoplasmic reticulum vesicle protein 25">
    <location>
        <begin position="22"/>
        <end position="212"/>
    </location>
</feature>
<feature type="topological domain" description="Lumenal" evidence="2">
    <location>
        <begin position="22"/>
        <end position="181"/>
    </location>
</feature>
<feature type="transmembrane region" description="Helical" evidence="2">
    <location>
        <begin position="182"/>
        <end position="202"/>
    </location>
</feature>
<feature type="topological domain" description="Cytoplasmic" evidence="2">
    <location>
        <begin position="203"/>
        <end position="212"/>
    </location>
</feature>
<feature type="domain" description="GOLD" evidence="3">
    <location>
        <begin position="34"/>
        <end position="122"/>
    </location>
</feature>
<comment type="function">
    <text evidence="1">Constituent of COPII-coated endoplasmic reticulum-derived transport vesicles. Required for efficient transport of a subset of secretory proteins to the Golgi. Facilitates retrograde transport from the Golgi to the endoplasmic reticulum (By similarity).</text>
</comment>
<comment type="subcellular location">
    <subcellularLocation>
        <location evidence="1">Endoplasmic reticulum membrane</location>
        <topology evidence="1">Single-pass type I membrane protein</topology>
    </subcellularLocation>
    <subcellularLocation>
        <location evidence="1">Golgi apparatus membrane</location>
        <topology evidence="1">Single-pass type I membrane protein</topology>
    </subcellularLocation>
    <text evidence="1">Recycles between endoplasmic reticulum and Golgi.</text>
</comment>
<comment type="similarity">
    <text evidence="4">Belongs to the EMP24/GP25L family.</text>
</comment>
<accession>Q6CWW7</accession>
<keyword id="KW-0256">Endoplasmic reticulum</keyword>
<keyword id="KW-0931">ER-Golgi transport</keyword>
<keyword id="KW-0333">Golgi apparatus</keyword>
<keyword id="KW-0472">Membrane</keyword>
<keyword id="KW-0653">Protein transport</keyword>
<keyword id="KW-1185">Reference proteome</keyword>
<keyword id="KW-0732">Signal</keyword>
<keyword id="KW-0812">Transmembrane</keyword>
<keyword id="KW-1133">Transmembrane helix</keyword>
<keyword id="KW-0813">Transport</keyword>
<organism>
    <name type="scientific">Kluyveromyces lactis (strain ATCC 8585 / CBS 2359 / DSM 70799 / NBRC 1267 / NRRL Y-1140 / WM37)</name>
    <name type="common">Yeast</name>
    <name type="synonym">Candida sphaerica</name>
    <dbReference type="NCBI Taxonomy" id="284590"/>
    <lineage>
        <taxon>Eukaryota</taxon>
        <taxon>Fungi</taxon>
        <taxon>Dikarya</taxon>
        <taxon>Ascomycota</taxon>
        <taxon>Saccharomycotina</taxon>
        <taxon>Saccharomycetes</taxon>
        <taxon>Saccharomycetales</taxon>
        <taxon>Saccharomycetaceae</taxon>
        <taxon>Kluyveromyces</taxon>
    </lineage>
</organism>
<protein>
    <recommendedName>
        <fullName>Endoplasmic reticulum vesicle protein 25</fullName>
    </recommendedName>
</protein>
<sequence>MKSFAACVLLLCALFFEQVFAVRFDIPASTKPEQVCIRDFVSEGQLVLIDIETDGSVGDGQQLNLYVRDSNGNEYRRNRDIAGEVRVVFTAPQSTSFDVCFENVAQVNGRSLSRSIELDIESGSEARDWNKIQASEKLKPVEVELRRIEELTDEIVDEFNYLKGREERLRDTNESTNRRVRNFSIAVIVVLVALGAWQVNYMKNFFRAKHII</sequence>
<dbReference type="EMBL" id="CR382122">
    <property type="protein sequence ID" value="CAH01965.1"/>
    <property type="molecule type" value="Genomic_DNA"/>
</dbReference>
<dbReference type="RefSeq" id="XP_451572.1">
    <property type="nucleotide sequence ID" value="XM_451572.1"/>
</dbReference>
<dbReference type="SMR" id="Q6CWW7"/>
<dbReference type="FunCoup" id="Q6CWW7">
    <property type="interactions" value="1172"/>
</dbReference>
<dbReference type="STRING" id="284590.Q6CWW7"/>
<dbReference type="PaxDb" id="284590-Q6CWW7"/>
<dbReference type="KEGG" id="kla:KLLA0_B00935g"/>
<dbReference type="eggNOG" id="KOG1691">
    <property type="taxonomic scope" value="Eukaryota"/>
</dbReference>
<dbReference type="HOGENOM" id="CLU_066963_3_0_1"/>
<dbReference type="InParanoid" id="Q6CWW7"/>
<dbReference type="OMA" id="DVFEACF"/>
<dbReference type="Proteomes" id="UP000000598">
    <property type="component" value="Chromosome B"/>
</dbReference>
<dbReference type="GO" id="GO:0005789">
    <property type="term" value="C:endoplasmic reticulum membrane"/>
    <property type="evidence" value="ECO:0007669"/>
    <property type="project" value="UniProtKB-SubCell"/>
</dbReference>
<dbReference type="GO" id="GO:0000139">
    <property type="term" value="C:Golgi membrane"/>
    <property type="evidence" value="ECO:0007669"/>
    <property type="project" value="UniProtKB-SubCell"/>
</dbReference>
<dbReference type="GO" id="GO:0006888">
    <property type="term" value="P:endoplasmic reticulum to Golgi vesicle-mediated transport"/>
    <property type="evidence" value="ECO:0007669"/>
    <property type="project" value="UniProtKB-ARBA"/>
</dbReference>
<dbReference type="GO" id="GO:0015031">
    <property type="term" value="P:protein transport"/>
    <property type="evidence" value="ECO:0007669"/>
    <property type="project" value="UniProtKB-KW"/>
</dbReference>
<dbReference type="InterPro" id="IPR015720">
    <property type="entry name" value="Emp24-like"/>
</dbReference>
<dbReference type="InterPro" id="IPR009038">
    <property type="entry name" value="GOLD_dom"/>
</dbReference>
<dbReference type="PANTHER" id="PTHR22811">
    <property type="entry name" value="TRANSMEMBRANE EMP24 DOMAIN-CONTAINING PROTEIN"/>
    <property type="match status" value="1"/>
</dbReference>
<dbReference type="Pfam" id="PF01105">
    <property type="entry name" value="EMP24_GP25L"/>
    <property type="match status" value="1"/>
</dbReference>
<dbReference type="SMART" id="SM01190">
    <property type="entry name" value="EMP24_GP25L"/>
    <property type="match status" value="1"/>
</dbReference>
<dbReference type="PROSITE" id="PS50866">
    <property type="entry name" value="GOLD"/>
    <property type="match status" value="1"/>
</dbReference>
<proteinExistence type="inferred from homology"/>